<reference key="1">
    <citation type="journal article" date="2008" name="PLoS ONE">
        <title>Discovery of a distinct superfamily of Kunitz-type toxin (KTT) from tarantulas.</title>
        <authorList>
            <person name="Yuan C.-H."/>
            <person name="He Q.-Y."/>
            <person name="Peng K."/>
            <person name="Diao J.-B."/>
            <person name="Jiang L.-P."/>
            <person name="Tang X."/>
            <person name="Liang S.-P."/>
        </authorList>
    </citation>
    <scope>NUCLEOTIDE SEQUENCE [MRNA]</scope>
    <source>
        <tissue>Venom gland</tissue>
    </source>
</reference>
<reference evidence="9" key="2">
    <citation type="journal article" date="2014" name="Peptides">
        <title>Molecular cloning, bioinformatics analysis and functional characterization of HWTX-XI toxin superfamily from the spider Ornithoctonus huwena.</title>
        <authorList>
            <person name="Jiang L."/>
            <person name="Deng M."/>
            <person name="Duan Z."/>
            <person name="Tang X."/>
            <person name="Liang S."/>
        </authorList>
    </citation>
    <scope>NUCLEOTIDE SEQUENCE [GENOMIC DNA]</scope>
</reference>
<sequence length="88" mass="9779">MGTARFLSAVLLLSVLLMVTFPALLSAEYHDGRVDICSLPSDSGDCLRFFEMWYFDGTTCTKFVYGGYGGNDNRFPTEKACMKRCAKA</sequence>
<name>VKT6_CYRSC</name>
<keyword id="KW-1015">Disulfide bond</keyword>
<keyword id="KW-0646">Protease inhibitor</keyword>
<keyword id="KW-0964">Secreted</keyword>
<keyword id="KW-0722">Serine protease inhibitor</keyword>
<keyword id="KW-0732">Signal</keyword>
<comment type="function">
    <text evidence="2">Serine protease inhibitor that inhibits trypsin at a molar ratio of 1:1.</text>
</comment>
<comment type="subcellular location">
    <subcellularLocation>
        <location evidence="8">Secreted</location>
    </subcellularLocation>
</comment>
<comment type="tissue specificity">
    <text evidence="8">Expressed by the venom gland.</text>
</comment>
<comment type="similarity">
    <text evidence="7">Belongs to the venom Kunitz-type family. 03 (sub-Kunitz) subfamily.</text>
</comment>
<proteinExistence type="inferred from homology"/>
<accession>P0DJ78</accession>
<accession>A0A023WAC6</accession>
<organism>
    <name type="scientific">Cyriopagopus schmidti</name>
    <name type="common">Chinese bird spider</name>
    <name type="synonym">Haplopelma schmidti</name>
    <dbReference type="NCBI Taxonomy" id="29017"/>
    <lineage>
        <taxon>Eukaryota</taxon>
        <taxon>Metazoa</taxon>
        <taxon>Ecdysozoa</taxon>
        <taxon>Arthropoda</taxon>
        <taxon>Chelicerata</taxon>
        <taxon>Arachnida</taxon>
        <taxon>Araneae</taxon>
        <taxon>Mygalomorphae</taxon>
        <taxon>Theraphosidae</taxon>
        <taxon>Cyriopagopus</taxon>
    </lineage>
</organism>
<evidence type="ECO:0000250" key="1"/>
<evidence type="ECO:0000250" key="2">
    <source>
        <dbReference type="UniProtKB" id="P68425"/>
    </source>
</evidence>
<evidence type="ECO:0000255" key="3"/>
<evidence type="ECO:0000255" key="4">
    <source>
        <dbReference type="PROSITE-ProRule" id="PRU00031"/>
    </source>
</evidence>
<evidence type="ECO:0000303" key="5">
    <source>
    </source>
</evidence>
<evidence type="ECO:0000303" key="6">
    <source>
    </source>
</evidence>
<evidence type="ECO:0000305" key="7"/>
<evidence type="ECO:0000305" key="8">
    <source>
    </source>
</evidence>
<evidence type="ECO:0000312" key="9">
    <source>
        <dbReference type="EMBL" id="AHY30309.1"/>
    </source>
</evidence>
<protein>
    <recommendedName>
        <fullName>Kunitz-type U15-theraphotoxin-Hs1a</fullName>
        <shortName>U15-TRTX-Hs1a</shortName>
    </recommendedName>
    <alternativeName>
        <fullName evidence="6">Huwentoxin HW11c10</fullName>
    </alternativeName>
    <alternativeName>
        <fullName evidence="5">Kunitz-type serine protease inhibitor HWTX-XI-IS6</fullName>
    </alternativeName>
</protein>
<feature type="signal peptide" evidence="3">
    <location>
        <begin position="1"/>
        <end position="27"/>
    </location>
</feature>
<feature type="propeptide" id="PRO_0000413830" evidence="1">
    <location>
        <begin position="28"/>
        <end position="33"/>
    </location>
</feature>
<feature type="chain" id="PRO_0000413831" description="Kunitz-type U15-theraphotoxin-Hs1a">
    <location>
        <begin position="34"/>
        <end position="88"/>
    </location>
</feature>
<feature type="domain" description="BPTI/Kunitz inhibitor" evidence="4">
    <location>
        <begin position="37"/>
        <end position="85"/>
    </location>
</feature>
<feature type="site" description="May bind Kv1" evidence="1">
    <location>
        <position position="39"/>
    </location>
</feature>
<feature type="site" description="Reactive bond for chymotrypsin" evidence="1">
    <location>
        <begin position="47"/>
        <end position="48"/>
    </location>
</feature>
<feature type="disulfide bond" evidence="4">
    <location>
        <begin position="37"/>
        <end position="85"/>
    </location>
</feature>
<feature type="disulfide bond" evidence="4">
    <location>
        <begin position="60"/>
        <end position="81"/>
    </location>
</feature>
<dbReference type="EMBL" id="KF160298">
    <property type="protein sequence ID" value="AHY30309.1"/>
    <property type="molecule type" value="Genomic_DNA"/>
</dbReference>
<dbReference type="SMR" id="P0DJ78"/>
<dbReference type="ArachnoServer" id="AS000481">
    <property type="toxin name" value="U15-theraphotoxin-Hs1a"/>
</dbReference>
<dbReference type="GO" id="GO:0005576">
    <property type="term" value="C:extracellular region"/>
    <property type="evidence" value="ECO:0007669"/>
    <property type="project" value="UniProtKB-SubCell"/>
</dbReference>
<dbReference type="GO" id="GO:0015459">
    <property type="term" value="F:potassium channel regulator activity"/>
    <property type="evidence" value="ECO:0007669"/>
    <property type="project" value="UniProtKB-KW"/>
</dbReference>
<dbReference type="GO" id="GO:0004867">
    <property type="term" value="F:serine-type endopeptidase inhibitor activity"/>
    <property type="evidence" value="ECO:0007669"/>
    <property type="project" value="UniProtKB-KW"/>
</dbReference>
<dbReference type="GO" id="GO:0090729">
    <property type="term" value="F:toxin activity"/>
    <property type="evidence" value="ECO:0007669"/>
    <property type="project" value="UniProtKB-KW"/>
</dbReference>
<dbReference type="GO" id="GO:0044562">
    <property type="term" value="P:envenomation resulting in negative regulation of voltage-gated potassium channel activity in another organism"/>
    <property type="evidence" value="ECO:0007669"/>
    <property type="project" value="UniProtKB-ARBA"/>
</dbReference>
<dbReference type="CDD" id="cd22598">
    <property type="entry name" value="Kunitz_huwentoxin"/>
    <property type="match status" value="1"/>
</dbReference>
<dbReference type="FunFam" id="4.10.410.10:FF:000020">
    <property type="entry name" value="Collagen, type VI, alpha 3"/>
    <property type="match status" value="1"/>
</dbReference>
<dbReference type="Gene3D" id="4.10.410.10">
    <property type="entry name" value="Pancreatic trypsin inhibitor Kunitz domain"/>
    <property type="match status" value="1"/>
</dbReference>
<dbReference type="InterPro" id="IPR002223">
    <property type="entry name" value="Kunitz_BPTI"/>
</dbReference>
<dbReference type="InterPro" id="IPR036880">
    <property type="entry name" value="Kunitz_BPTI_sf"/>
</dbReference>
<dbReference type="InterPro" id="IPR051388">
    <property type="entry name" value="Serpin_venom_toxin"/>
</dbReference>
<dbReference type="PANTHER" id="PTHR46751">
    <property type="entry name" value="EPPIN"/>
    <property type="match status" value="1"/>
</dbReference>
<dbReference type="PANTHER" id="PTHR46751:SF1">
    <property type="entry name" value="WAP FOUR-DISULFIDE CORE DOMAIN PROTEIN 6A"/>
    <property type="match status" value="1"/>
</dbReference>
<dbReference type="Pfam" id="PF00014">
    <property type="entry name" value="Kunitz_BPTI"/>
    <property type="match status" value="1"/>
</dbReference>
<dbReference type="PRINTS" id="PR00759">
    <property type="entry name" value="BASICPTASE"/>
</dbReference>
<dbReference type="SMART" id="SM00131">
    <property type="entry name" value="KU"/>
    <property type="match status" value="1"/>
</dbReference>
<dbReference type="SUPFAM" id="SSF57362">
    <property type="entry name" value="BPTI-like"/>
    <property type="match status" value="1"/>
</dbReference>
<dbReference type="PROSITE" id="PS50279">
    <property type="entry name" value="BPTI_KUNITZ_2"/>
    <property type="match status" value="1"/>
</dbReference>